<keyword id="KW-0004">4Fe-4S</keyword>
<keyword id="KW-0963">Cytoplasm</keyword>
<keyword id="KW-0408">Iron</keyword>
<keyword id="KW-0411">Iron-sulfur</keyword>
<keyword id="KW-0479">Metal-binding</keyword>
<keyword id="KW-1185">Reference proteome</keyword>
<keyword id="KW-0949">S-adenosyl-L-methionine</keyword>
<keyword id="KW-0808">Transferase</keyword>
<comment type="function">
    <text evidence="1">Catalyzes the radical-mediated insertion of two sulfur atoms into the C-6 and C-8 positions of the octanoyl moiety bound to the lipoyl domains of lipoate-dependent enzymes, thereby converting the octanoylated domains into lipoylated derivatives.</text>
</comment>
<comment type="catalytic activity">
    <reaction evidence="1">
        <text>[[Fe-S] cluster scaffold protein carrying a second [4Fe-4S](2+) cluster] + N(6)-octanoyl-L-lysyl-[protein] + 2 oxidized [2Fe-2S]-[ferredoxin] + 2 S-adenosyl-L-methionine + 4 H(+) = [[Fe-S] cluster scaffold protein] + N(6)-[(R)-dihydrolipoyl]-L-lysyl-[protein] + 4 Fe(3+) + 2 hydrogen sulfide + 2 5'-deoxyadenosine + 2 L-methionine + 2 reduced [2Fe-2S]-[ferredoxin]</text>
        <dbReference type="Rhea" id="RHEA:16585"/>
        <dbReference type="Rhea" id="RHEA-COMP:9928"/>
        <dbReference type="Rhea" id="RHEA-COMP:10000"/>
        <dbReference type="Rhea" id="RHEA-COMP:10001"/>
        <dbReference type="Rhea" id="RHEA-COMP:10475"/>
        <dbReference type="Rhea" id="RHEA-COMP:14568"/>
        <dbReference type="Rhea" id="RHEA-COMP:14569"/>
        <dbReference type="ChEBI" id="CHEBI:15378"/>
        <dbReference type="ChEBI" id="CHEBI:17319"/>
        <dbReference type="ChEBI" id="CHEBI:29034"/>
        <dbReference type="ChEBI" id="CHEBI:29919"/>
        <dbReference type="ChEBI" id="CHEBI:33722"/>
        <dbReference type="ChEBI" id="CHEBI:33737"/>
        <dbReference type="ChEBI" id="CHEBI:33738"/>
        <dbReference type="ChEBI" id="CHEBI:57844"/>
        <dbReference type="ChEBI" id="CHEBI:59789"/>
        <dbReference type="ChEBI" id="CHEBI:78809"/>
        <dbReference type="ChEBI" id="CHEBI:83100"/>
        <dbReference type="EC" id="2.8.1.8"/>
    </reaction>
</comment>
<comment type="cofactor">
    <cofactor evidence="1">
        <name>[4Fe-4S] cluster</name>
        <dbReference type="ChEBI" id="CHEBI:49883"/>
    </cofactor>
    <text evidence="1">Binds 2 [4Fe-4S] clusters per subunit. One cluster is coordinated with 3 cysteines and an exchangeable S-adenosyl-L-methionine.</text>
</comment>
<comment type="pathway">
    <text evidence="1">Protein modification; protein lipoylation via endogenous pathway; protein N(6)-(lipoyl)lysine from octanoyl-[acyl-carrier-protein]: step 2/2.</text>
</comment>
<comment type="subcellular location">
    <subcellularLocation>
        <location evidence="1">Cytoplasm</location>
    </subcellularLocation>
</comment>
<comment type="similarity">
    <text evidence="1">Belongs to the radical SAM superfamily. Lipoyl synthase family.</text>
</comment>
<feature type="chain" id="PRO_1000124647" description="Lipoyl synthase">
    <location>
        <begin position="1"/>
        <end position="320"/>
    </location>
</feature>
<feature type="domain" description="Radical SAM core" evidence="2">
    <location>
        <begin position="77"/>
        <end position="295"/>
    </location>
</feature>
<feature type="binding site" evidence="1">
    <location>
        <position position="66"/>
    </location>
    <ligand>
        <name>[4Fe-4S] cluster</name>
        <dbReference type="ChEBI" id="CHEBI:49883"/>
        <label>1</label>
    </ligand>
</feature>
<feature type="binding site" evidence="1">
    <location>
        <position position="71"/>
    </location>
    <ligand>
        <name>[4Fe-4S] cluster</name>
        <dbReference type="ChEBI" id="CHEBI:49883"/>
        <label>1</label>
    </ligand>
</feature>
<feature type="binding site" evidence="1">
    <location>
        <position position="77"/>
    </location>
    <ligand>
        <name>[4Fe-4S] cluster</name>
        <dbReference type="ChEBI" id="CHEBI:49883"/>
        <label>1</label>
    </ligand>
</feature>
<feature type="binding site" evidence="1">
    <location>
        <position position="92"/>
    </location>
    <ligand>
        <name>[4Fe-4S] cluster</name>
        <dbReference type="ChEBI" id="CHEBI:49883"/>
        <label>2</label>
        <note>4Fe-4S-S-AdoMet</note>
    </ligand>
</feature>
<feature type="binding site" evidence="1">
    <location>
        <position position="96"/>
    </location>
    <ligand>
        <name>[4Fe-4S] cluster</name>
        <dbReference type="ChEBI" id="CHEBI:49883"/>
        <label>2</label>
        <note>4Fe-4S-S-AdoMet</note>
    </ligand>
</feature>
<feature type="binding site" evidence="1">
    <location>
        <position position="99"/>
    </location>
    <ligand>
        <name>[4Fe-4S] cluster</name>
        <dbReference type="ChEBI" id="CHEBI:49883"/>
        <label>2</label>
        <note>4Fe-4S-S-AdoMet</note>
    </ligand>
</feature>
<feature type="binding site" evidence="1">
    <location>
        <position position="306"/>
    </location>
    <ligand>
        <name>[4Fe-4S] cluster</name>
        <dbReference type="ChEBI" id="CHEBI:49883"/>
        <label>1</label>
    </ligand>
</feature>
<name>LIPA_THISH</name>
<reference key="1">
    <citation type="journal article" date="2011" name="Stand. Genomic Sci.">
        <title>Complete genome sequence of 'Thioalkalivibrio sulfidophilus' HL-EbGr7.</title>
        <authorList>
            <person name="Muyzer G."/>
            <person name="Sorokin D.Y."/>
            <person name="Mavromatis K."/>
            <person name="Lapidus A."/>
            <person name="Clum A."/>
            <person name="Ivanova N."/>
            <person name="Pati A."/>
            <person name="d'Haeseleer P."/>
            <person name="Woyke T."/>
            <person name="Kyrpides N.C."/>
        </authorList>
    </citation>
    <scope>NUCLEOTIDE SEQUENCE [LARGE SCALE GENOMIC DNA]</scope>
    <source>
        <strain>HL-EbGR7</strain>
    </source>
</reference>
<dbReference type="EC" id="2.8.1.8" evidence="1"/>
<dbReference type="EMBL" id="CP001339">
    <property type="protein sequence ID" value="ACL73771.1"/>
    <property type="molecule type" value="Genomic_DNA"/>
</dbReference>
<dbReference type="RefSeq" id="WP_012639246.1">
    <property type="nucleotide sequence ID" value="NC_011901.1"/>
</dbReference>
<dbReference type="SMR" id="B8GMV6"/>
<dbReference type="STRING" id="396588.Tgr7_2696"/>
<dbReference type="KEGG" id="tgr:Tgr7_2696"/>
<dbReference type="eggNOG" id="COG0320">
    <property type="taxonomic scope" value="Bacteria"/>
</dbReference>
<dbReference type="HOGENOM" id="CLU_033144_2_1_6"/>
<dbReference type="OrthoDB" id="9787898at2"/>
<dbReference type="UniPathway" id="UPA00538">
    <property type="reaction ID" value="UER00593"/>
</dbReference>
<dbReference type="Proteomes" id="UP000002383">
    <property type="component" value="Chromosome"/>
</dbReference>
<dbReference type="GO" id="GO:0005737">
    <property type="term" value="C:cytoplasm"/>
    <property type="evidence" value="ECO:0007669"/>
    <property type="project" value="UniProtKB-SubCell"/>
</dbReference>
<dbReference type="GO" id="GO:0051539">
    <property type="term" value="F:4 iron, 4 sulfur cluster binding"/>
    <property type="evidence" value="ECO:0007669"/>
    <property type="project" value="UniProtKB-UniRule"/>
</dbReference>
<dbReference type="GO" id="GO:0016992">
    <property type="term" value="F:lipoate synthase activity"/>
    <property type="evidence" value="ECO:0007669"/>
    <property type="project" value="UniProtKB-UniRule"/>
</dbReference>
<dbReference type="GO" id="GO:0046872">
    <property type="term" value="F:metal ion binding"/>
    <property type="evidence" value="ECO:0007669"/>
    <property type="project" value="UniProtKB-KW"/>
</dbReference>
<dbReference type="CDD" id="cd01335">
    <property type="entry name" value="Radical_SAM"/>
    <property type="match status" value="1"/>
</dbReference>
<dbReference type="FunFam" id="3.20.20.70:FF:000023">
    <property type="entry name" value="Lipoyl synthase"/>
    <property type="match status" value="1"/>
</dbReference>
<dbReference type="Gene3D" id="3.20.20.70">
    <property type="entry name" value="Aldolase class I"/>
    <property type="match status" value="1"/>
</dbReference>
<dbReference type="HAMAP" id="MF_00206">
    <property type="entry name" value="Lipoyl_synth"/>
    <property type="match status" value="1"/>
</dbReference>
<dbReference type="InterPro" id="IPR013785">
    <property type="entry name" value="Aldolase_TIM"/>
</dbReference>
<dbReference type="InterPro" id="IPR006638">
    <property type="entry name" value="Elp3/MiaA/NifB-like_rSAM"/>
</dbReference>
<dbReference type="InterPro" id="IPR003698">
    <property type="entry name" value="Lipoyl_synth"/>
</dbReference>
<dbReference type="InterPro" id="IPR007197">
    <property type="entry name" value="rSAM"/>
</dbReference>
<dbReference type="NCBIfam" id="TIGR00510">
    <property type="entry name" value="lipA"/>
    <property type="match status" value="1"/>
</dbReference>
<dbReference type="NCBIfam" id="NF004019">
    <property type="entry name" value="PRK05481.1"/>
    <property type="match status" value="1"/>
</dbReference>
<dbReference type="NCBIfam" id="NF009544">
    <property type="entry name" value="PRK12928.1"/>
    <property type="match status" value="1"/>
</dbReference>
<dbReference type="PANTHER" id="PTHR10949">
    <property type="entry name" value="LIPOYL SYNTHASE"/>
    <property type="match status" value="1"/>
</dbReference>
<dbReference type="PANTHER" id="PTHR10949:SF0">
    <property type="entry name" value="LIPOYL SYNTHASE, MITOCHONDRIAL"/>
    <property type="match status" value="1"/>
</dbReference>
<dbReference type="Pfam" id="PF04055">
    <property type="entry name" value="Radical_SAM"/>
    <property type="match status" value="1"/>
</dbReference>
<dbReference type="PIRSF" id="PIRSF005963">
    <property type="entry name" value="Lipoyl_synth"/>
    <property type="match status" value="1"/>
</dbReference>
<dbReference type="SFLD" id="SFLDF00271">
    <property type="entry name" value="lipoyl_synthase"/>
    <property type="match status" value="1"/>
</dbReference>
<dbReference type="SFLD" id="SFLDS00029">
    <property type="entry name" value="Radical_SAM"/>
    <property type="match status" value="1"/>
</dbReference>
<dbReference type="SMART" id="SM00729">
    <property type="entry name" value="Elp3"/>
    <property type="match status" value="1"/>
</dbReference>
<dbReference type="SUPFAM" id="SSF102114">
    <property type="entry name" value="Radical SAM enzymes"/>
    <property type="match status" value="1"/>
</dbReference>
<dbReference type="PROSITE" id="PS51918">
    <property type="entry name" value="RADICAL_SAM"/>
    <property type="match status" value="1"/>
</dbReference>
<organism>
    <name type="scientific">Thioalkalivibrio sulfidiphilus (strain HL-EbGR7)</name>
    <dbReference type="NCBI Taxonomy" id="396588"/>
    <lineage>
        <taxon>Bacteria</taxon>
        <taxon>Pseudomonadati</taxon>
        <taxon>Pseudomonadota</taxon>
        <taxon>Gammaproteobacteria</taxon>
        <taxon>Chromatiales</taxon>
        <taxon>Ectothiorhodospiraceae</taxon>
        <taxon>Thioalkalivibrio</taxon>
    </lineage>
</organism>
<sequence length="320" mass="36085">MTDTRKSPEPGVKLRAADKVARIPVKIAPTEKPLRKPAWIRARTHGSPEVQRLKRVLREQRLHTVCEEASCPNLGECFGHGTATFMIMGDICTRRCPFCDVAHGRPEPLDAEEPENLARTIAAMGLRYVVITSVDRDDLRDGGARHFVDCIRTTRAHSPDIRIEILVPDFRGRMDVALAILNEAPPDVFNHNLETVPRLYREARPGSDYDWSLDLIQRFKETHPQVPTKSGLMLGLGEEMHEVEAVMRDLRDHGCDMLTLGQYLQPSLHHLPVKRYVTPEEFDRLAEIGYAMGFSQVASGPMVRSSYHADQQAQKVIPEG</sequence>
<proteinExistence type="inferred from homology"/>
<protein>
    <recommendedName>
        <fullName evidence="1">Lipoyl synthase</fullName>
        <ecNumber evidence="1">2.8.1.8</ecNumber>
    </recommendedName>
    <alternativeName>
        <fullName evidence="1">Lip-syn</fullName>
        <shortName evidence="1">LS</shortName>
    </alternativeName>
    <alternativeName>
        <fullName evidence="1">Lipoate synthase</fullName>
    </alternativeName>
    <alternativeName>
        <fullName evidence="1">Lipoic acid synthase</fullName>
    </alternativeName>
    <alternativeName>
        <fullName evidence="1">Sulfur insertion protein LipA</fullName>
    </alternativeName>
</protein>
<accession>B8GMV6</accession>
<gene>
    <name evidence="1" type="primary">lipA</name>
    <name type="ordered locus">Tgr7_2696</name>
</gene>
<evidence type="ECO:0000255" key="1">
    <source>
        <dbReference type="HAMAP-Rule" id="MF_00206"/>
    </source>
</evidence>
<evidence type="ECO:0000255" key="2">
    <source>
        <dbReference type="PROSITE-ProRule" id="PRU01266"/>
    </source>
</evidence>